<gene>
    <name type="primary">BI1</name>
    <name type="ordered locus">Os02g0125300</name>
    <name type="ordered locus">LOC_Os02g03280</name>
    <name type="ORF">P0482F12.1-1</name>
    <name type="ORF">P0482F12.1-2</name>
</gene>
<evidence type="ECO:0000250" key="1"/>
<evidence type="ECO:0000255" key="2"/>
<evidence type="ECO:0000305" key="3"/>
<keyword id="KW-0053">Apoptosis</keyword>
<keyword id="KW-0472">Membrane</keyword>
<keyword id="KW-1185">Reference proteome</keyword>
<keyword id="KW-0812">Transmembrane</keyword>
<keyword id="KW-1133">Transmembrane helix</keyword>
<proteinExistence type="evidence at transcript level"/>
<organism>
    <name type="scientific">Oryza sativa subsp. japonica</name>
    <name type="common">Rice</name>
    <dbReference type="NCBI Taxonomy" id="39947"/>
    <lineage>
        <taxon>Eukaryota</taxon>
        <taxon>Viridiplantae</taxon>
        <taxon>Streptophyta</taxon>
        <taxon>Embryophyta</taxon>
        <taxon>Tracheophyta</taxon>
        <taxon>Spermatophyta</taxon>
        <taxon>Magnoliopsida</taxon>
        <taxon>Liliopsida</taxon>
        <taxon>Poales</taxon>
        <taxon>Poaceae</taxon>
        <taxon>BOP clade</taxon>
        <taxon>Oryzoideae</taxon>
        <taxon>Oryzeae</taxon>
        <taxon>Oryzinae</taxon>
        <taxon>Oryza</taxon>
        <taxon>Oryza sativa</taxon>
    </lineage>
</organism>
<name>BI1_ORYSJ</name>
<feature type="chain" id="PRO_0000179086" description="Bax inhibitor 1">
    <location>
        <begin position="1"/>
        <end position="249"/>
    </location>
</feature>
<feature type="transmembrane region" description="Helical" evidence="2">
    <location>
        <begin position="39"/>
        <end position="59"/>
    </location>
</feature>
<feature type="transmembrane region" description="Helical" evidence="2">
    <location>
        <begin position="65"/>
        <end position="85"/>
    </location>
</feature>
<feature type="transmembrane region" description="Helical" evidence="2">
    <location>
        <begin position="93"/>
        <end position="113"/>
    </location>
</feature>
<feature type="transmembrane region" description="Helical" evidence="2">
    <location>
        <begin position="119"/>
        <end position="139"/>
    </location>
</feature>
<feature type="transmembrane region" description="Helical" evidence="2">
    <location>
        <begin position="151"/>
        <end position="171"/>
    </location>
</feature>
<feature type="transmembrane region" description="Helical" evidence="2">
    <location>
        <begin position="213"/>
        <end position="233"/>
    </location>
</feature>
<protein>
    <recommendedName>
        <fullName>Bax inhibitor 1</fullName>
        <shortName>BI-1</shortName>
    </recommendedName>
    <alternativeName>
        <fullName>OsBI-1</fullName>
    </alternativeName>
</protein>
<sequence>MDAFYSTSSAYGAAASGWGYDSLKNFRQISPAVQSHLKLVYLTLCVALAASAVGAYLHVALNIGGMLTMLGCVGSIAWLFSVPVFEERKRFGILLAAALLEGASVGPLIKLAVDFDSSILVTAFVGTAIAFGCFTCAAIVAKRREYLYLGGLLSSGLSILLWLQFAASIFGHSTGSFMFEVYFGLLIFLGYMVYDTQEIIERAHHGDMDYIKHALTLFTDFVAVLVRILVIMLKNASDKSEEKKRKKRS</sequence>
<comment type="function">
    <text evidence="1">Suppressor of apoptosis.</text>
</comment>
<comment type="subcellular location">
    <subcellularLocation>
        <location evidence="3">Membrane</location>
        <topology evidence="3">Multi-pass membrane protein</topology>
    </subcellularLocation>
</comment>
<comment type="tissue specificity">
    <text>Ubiquitous.</text>
</comment>
<comment type="similarity">
    <text evidence="3">Belongs to the BI1 family.</text>
</comment>
<comment type="sequence caution" evidence="3">
    <conflict type="erroneous gene model prediction">
        <sequence resource="EMBL-CDS" id="BAD08007"/>
    </conflict>
</comment>
<reference key="1">
    <citation type="journal article" date="1999" name="FEBS Lett.">
        <title>Evolutionally conserved plant homologue of the Bax inhibitor-1 (BI-1) gene capable of suppressing Bax-induced cell death in yeast.</title>
        <authorList>
            <person name="Kawai M."/>
            <person name="Pan L."/>
            <person name="Reed J.C."/>
            <person name="Uchimiya H."/>
        </authorList>
    </citation>
    <scope>NUCLEOTIDE SEQUENCE [MRNA]</scope>
    <source>
        <strain>cv. Yamahoushi</strain>
    </source>
</reference>
<reference key="2">
    <citation type="journal article" date="2005" name="Nature">
        <title>The map-based sequence of the rice genome.</title>
        <authorList>
            <consortium name="International rice genome sequencing project (IRGSP)"/>
        </authorList>
    </citation>
    <scope>NUCLEOTIDE SEQUENCE [LARGE SCALE GENOMIC DNA]</scope>
    <source>
        <strain>cv. Nipponbare</strain>
    </source>
</reference>
<reference key="3">
    <citation type="journal article" date="2008" name="Nucleic Acids Res.">
        <title>The rice annotation project database (RAP-DB): 2008 update.</title>
        <authorList>
            <consortium name="The rice annotation project (RAP)"/>
        </authorList>
    </citation>
    <scope>GENOME REANNOTATION</scope>
    <source>
        <strain>cv. Nipponbare</strain>
    </source>
</reference>
<reference key="4">
    <citation type="journal article" date="2013" name="Rice">
        <title>Improvement of the Oryza sativa Nipponbare reference genome using next generation sequence and optical map data.</title>
        <authorList>
            <person name="Kawahara Y."/>
            <person name="de la Bastide M."/>
            <person name="Hamilton J.P."/>
            <person name="Kanamori H."/>
            <person name="McCombie W.R."/>
            <person name="Ouyang S."/>
            <person name="Schwartz D.C."/>
            <person name="Tanaka T."/>
            <person name="Wu J."/>
            <person name="Zhou S."/>
            <person name="Childs K.L."/>
            <person name="Davidson R.M."/>
            <person name="Lin H."/>
            <person name="Quesada-Ocampo L."/>
            <person name="Vaillancourt B."/>
            <person name="Sakai H."/>
            <person name="Lee S.S."/>
            <person name="Kim J."/>
            <person name="Numa H."/>
            <person name="Itoh T."/>
            <person name="Buell C.R."/>
            <person name="Matsumoto T."/>
        </authorList>
    </citation>
    <scope>GENOME REANNOTATION</scope>
    <source>
        <strain>cv. Nipponbare</strain>
    </source>
</reference>
<reference key="5">
    <citation type="journal article" date="2003" name="Science">
        <title>Collection, mapping, and annotation of over 28,000 cDNA clones from japonica rice.</title>
        <authorList>
            <consortium name="The rice full-length cDNA consortium"/>
        </authorList>
    </citation>
    <scope>NUCLEOTIDE SEQUENCE [LARGE SCALE MRNA]</scope>
    <source>
        <strain>cv. Nipponbare</strain>
    </source>
</reference>
<dbReference type="EMBL" id="AB025926">
    <property type="protein sequence ID" value="BAA89540.3"/>
    <property type="molecule type" value="mRNA"/>
</dbReference>
<dbReference type="EMBL" id="AP005311">
    <property type="protein sequence ID" value="BAD08006.1"/>
    <property type="molecule type" value="Genomic_DNA"/>
</dbReference>
<dbReference type="EMBL" id="AP005311">
    <property type="protein sequence ID" value="BAD08007.1"/>
    <property type="status" value="ALT_SEQ"/>
    <property type="molecule type" value="Genomic_DNA"/>
</dbReference>
<dbReference type="EMBL" id="AP008208">
    <property type="protein sequence ID" value="BAF07659.1"/>
    <property type="molecule type" value="Genomic_DNA"/>
</dbReference>
<dbReference type="EMBL" id="AP014958">
    <property type="protein sequence ID" value="BAS76758.1"/>
    <property type="molecule type" value="Genomic_DNA"/>
</dbReference>
<dbReference type="EMBL" id="AK061564">
    <property type="protein sequence ID" value="BAG88010.1"/>
    <property type="molecule type" value="mRNA"/>
</dbReference>
<dbReference type="EMBL" id="AK101060">
    <property type="protein sequence ID" value="BAG94894.1"/>
    <property type="molecule type" value="mRNA"/>
</dbReference>
<dbReference type="RefSeq" id="XP_015625700.1">
    <property type="nucleotide sequence ID" value="XM_015770214.1"/>
</dbReference>
<dbReference type="SMR" id="Q9MBD8"/>
<dbReference type="FunCoup" id="Q9MBD8">
    <property type="interactions" value="1784"/>
</dbReference>
<dbReference type="STRING" id="39947.Q9MBD8"/>
<dbReference type="PaxDb" id="39947-Q9MBD8"/>
<dbReference type="EnsemblPlants" id="Os02t0125300-01">
    <property type="protein sequence ID" value="Os02t0125300-01"/>
    <property type="gene ID" value="Os02g0125300"/>
</dbReference>
<dbReference type="EnsemblPlants" id="Os02t0125300-02">
    <property type="protein sequence ID" value="Os02t0125300-02"/>
    <property type="gene ID" value="Os02g0125300"/>
</dbReference>
<dbReference type="Gramene" id="Os02t0125300-01">
    <property type="protein sequence ID" value="Os02t0125300-01"/>
    <property type="gene ID" value="Os02g0125300"/>
</dbReference>
<dbReference type="Gramene" id="Os02t0125300-02">
    <property type="protein sequence ID" value="Os02t0125300-02"/>
    <property type="gene ID" value="Os02g0125300"/>
</dbReference>
<dbReference type="KEGG" id="dosa:Os02g0125300"/>
<dbReference type="eggNOG" id="KOG1629">
    <property type="taxonomic scope" value="Eukaryota"/>
</dbReference>
<dbReference type="HOGENOM" id="CLU_061277_1_0_1"/>
<dbReference type="InParanoid" id="Q9MBD8"/>
<dbReference type="OMA" id="SRDFIMH"/>
<dbReference type="OrthoDB" id="1277691at2759"/>
<dbReference type="Proteomes" id="UP000000763">
    <property type="component" value="Chromosome 2"/>
</dbReference>
<dbReference type="Proteomes" id="UP000059680">
    <property type="component" value="Chromosome 2"/>
</dbReference>
<dbReference type="GO" id="GO:0016020">
    <property type="term" value="C:membrane"/>
    <property type="evidence" value="ECO:0000318"/>
    <property type="project" value="GO_Central"/>
</dbReference>
<dbReference type="GO" id="GO:0005262">
    <property type="term" value="F:calcium channel activity"/>
    <property type="evidence" value="ECO:0000318"/>
    <property type="project" value="GO_Central"/>
</dbReference>
<dbReference type="GO" id="GO:0043066">
    <property type="term" value="P:negative regulation of apoptotic process"/>
    <property type="evidence" value="ECO:0007669"/>
    <property type="project" value="InterPro"/>
</dbReference>
<dbReference type="CDD" id="cd10430">
    <property type="entry name" value="BI-1"/>
    <property type="match status" value="1"/>
</dbReference>
<dbReference type="InterPro" id="IPR006213">
    <property type="entry name" value="Bax_inhbtr1_CS"/>
</dbReference>
<dbReference type="InterPro" id="IPR006214">
    <property type="entry name" value="Bax_inhibitor_1-related"/>
</dbReference>
<dbReference type="PANTHER" id="PTHR23291:SF32">
    <property type="entry name" value="BAX INHIBITOR 1"/>
    <property type="match status" value="1"/>
</dbReference>
<dbReference type="PANTHER" id="PTHR23291">
    <property type="entry name" value="BAX INHIBITOR-RELATED"/>
    <property type="match status" value="1"/>
</dbReference>
<dbReference type="Pfam" id="PF01027">
    <property type="entry name" value="Bax1-I"/>
    <property type="match status" value="1"/>
</dbReference>
<dbReference type="PROSITE" id="PS01243">
    <property type="entry name" value="BI1"/>
    <property type="match status" value="1"/>
</dbReference>
<accession>Q9MBD8</accession>
<accession>Q0E4C9</accession>
<accession>Q6Z2N7</accession>
<accession>Q6Z2N8</accession>